<sequence>MMMSDLSLDLVEEILSRVPATSLKRLRSTCKLWNALFKNPGFTKKQFLKAPKESLVLMLKEYSVCPMIANLSVSAPSIEFKGALNLKNYPPYSEEVDIHEACHCDGLLLCTTMDYRIVVWNPCLGETRWIRWPKNIYSRFALGYEKNKYGRIYKILRCWDRHNSPTGRVDEFEIYEFSSDSWRVLDLVALDCHIASHIGVSFKGNTYWLASDKKDKYGLLLCFDFTTERFTRLCLPPSQDVSKMALSVVGGKQLSLLSQSDSTSKIMEMWVTNIIEDVLMWSKSFTVDIPIRGDYCPYLTSYLVDEEKKVAVCYNENFEKSNKKVYIIGEDNGYYTEIPLVESSYQVWGYPIIFNYVPSLVQIEEGGCIIKE</sequence>
<protein>
    <recommendedName>
        <fullName>Putative F-box/kelch-repeat protein At3g22730</fullName>
    </recommendedName>
</protein>
<keyword id="KW-0880">Kelch repeat</keyword>
<keyword id="KW-1185">Reference proteome</keyword>
<keyword id="KW-0677">Repeat</keyword>
<reference key="1">
    <citation type="journal article" date="2000" name="DNA Res.">
        <title>Structural analysis of Arabidopsis thaliana chromosome 3. I. Sequence features of the regions of 4,504,864 bp covered by sixty P1 and TAC clones.</title>
        <authorList>
            <person name="Sato S."/>
            <person name="Nakamura Y."/>
            <person name="Kaneko T."/>
            <person name="Katoh T."/>
            <person name="Asamizu E."/>
            <person name="Tabata S."/>
        </authorList>
    </citation>
    <scope>NUCLEOTIDE SEQUENCE [LARGE SCALE GENOMIC DNA]</scope>
    <source>
        <strain>cv. Columbia</strain>
    </source>
</reference>
<reference key="2">
    <citation type="journal article" date="2017" name="Plant J.">
        <title>Araport11: a complete reannotation of the Arabidopsis thaliana reference genome.</title>
        <authorList>
            <person name="Cheng C.Y."/>
            <person name="Krishnakumar V."/>
            <person name="Chan A.P."/>
            <person name="Thibaud-Nissen F."/>
            <person name="Schobel S."/>
            <person name="Town C.D."/>
        </authorList>
    </citation>
    <scope>GENOME REANNOTATION</scope>
    <source>
        <strain>cv. Columbia</strain>
    </source>
</reference>
<dbReference type="EMBL" id="AB022223">
    <property type="protein sequence ID" value="BAB01248.1"/>
    <property type="molecule type" value="Genomic_DNA"/>
</dbReference>
<dbReference type="EMBL" id="CP002686">
    <property type="protein sequence ID" value="AEE76671.1"/>
    <property type="molecule type" value="Genomic_DNA"/>
</dbReference>
<dbReference type="RefSeq" id="NP_188912.1">
    <property type="nucleotide sequence ID" value="NM_113172.1"/>
</dbReference>
<dbReference type="SMR" id="Q9LUI8"/>
<dbReference type="FunCoup" id="Q9LUI8">
    <property type="interactions" value="17"/>
</dbReference>
<dbReference type="STRING" id="3702.Q9LUI8"/>
<dbReference type="PaxDb" id="3702-AT3G22730.1"/>
<dbReference type="EnsemblPlants" id="AT3G22730.1">
    <property type="protein sequence ID" value="AT3G22730.1"/>
    <property type="gene ID" value="AT3G22730"/>
</dbReference>
<dbReference type="GeneID" id="821844"/>
<dbReference type="Gramene" id="AT3G22730.1">
    <property type="protein sequence ID" value="AT3G22730.1"/>
    <property type="gene ID" value="AT3G22730"/>
</dbReference>
<dbReference type="KEGG" id="ath:AT3G22730"/>
<dbReference type="Araport" id="AT3G22730"/>
<dbReference type="TAIR" id="AT3G22730"/>
<dbReference type="HOGENOM" id="CLU_034692_0_0_1"/>
<dbReference type="InParanoid" id="Q9LUI8"/>
<dbReference type="OMA" id="DIHEACH"/>
<dbReference type="PhylomeDB" id="Q9LUI8"/>
<dbReference type="PRO" id="PR:Q9LUI8"/>
<dbReference type="Proteomes" id="UP000006548">
    <property type="component" value="Chromosome 3"/>
</dbReference>
<dbReference type="ExpressionAtlas" id="Q9LUI8">
    <property type="expression patterns" value="baseline and differential"/>
</dbReference>
<dbReference type="CDD" id="cd22157">
    <property type="entry name" value="F-box_AtFBW1-like"/>
    <property type="match status" value="1"/>
</dbReference>
<dbReference type="Gene3D" id="1.20.1280.50">
    <property type="match status" value="1"/>
</dbReference>
<dbReference type="InterPro" id="IPR006527">
    <property type="entry name" value="F-box-assoc_dom_typ1"/>
</dbReference>
<dbReference type="InterPro" id="IPR017451">
    <property type="entry name" value="F-box-assoc_interact_dom"/>
</dbReference>
<dbReference type="InterPro" id="IPR036047">
    <property type="entry name" value="F-box-like_dom_sf"/>
</dbReference>
<dbReference type="InterPro" id="IPR001810">
    <property type="entry name" value="F-box_dom"/>
</dbReference>
<dbReference type="InterPro" id="IPR011043">
    <property type="entry name" value="Gal_Oxase/kelch_b-propeller"/>
</dbReference>
<dbReference type="InterPro" id="IPR050796">
    <property type="entry name" value="SCF_F-box_component"/>
</dbReference>
<dbReference type="NCBIfam" id="TIGR01640">
    <property type="entry name" value="F_box_assoc_1"/>
    <property type="match status" value="1"/>
</dbReference>
<dbReference type="PANTHER" id="PTHR31672">
    <property type="entry name" value="BNACNNG10540D PROTEIN"/>
    <property type="match status" value="1"/>
</dbReference>
<dbReference type="PANTHER" id="PTHR31672:SF13">
    <property type="entry name" value="F-BOX PROTEIN CPR30-LIKE"/>
    <property type="match status" value="1"/>
</dbReference>
<dbReference type="Pfam" id="PF00646">
    <property type="entry name" value="F-box"/>
    <property type="match status" value="1"/>
</dbReference>
<dbReference type="Pfam" id="PF07734">
    <property type="entry name" value="FBA_1"/>
    <property type="match status" value="1"/>
</dbReference>
<dbReference type="SMART" id="SM00256">
    <property type="entry name" value="FBOX"/>
    <property type="match status" value="1"/>
</dbReference>
<dbReference type="SUPFAM" id="SSF81383">
    <property type="entry name" value="F-box domain"/>
    <property type="match status" value="1"/>
</dbReference>
<dbReference type="SUPFAM" id="SSF50965">
    <property type="entry name" value="Galactose oxidase, central domain"/>
    <property type="match status" value="1"/>
</dbReference>
<organism>
    <name type="scientific">Arabidopsis thaliana</name>
    <name type="common">Mouse-ear cress</name>
    <dbReference type="NCBI Taxonomy" id="3702"/>
    <lineage>
        <taxon>Eukaryota</taxon>
        <taxon>Viridiplantae</taxon>
        <taxon>Streptophyta</taxon>
        <taxon>Embryophyta</taxon>
        <taxon>Tracheophyta</taxon>
        <taxon>Spermatophyta</taxon>
        <taxon>Magnoliopsida</taxon>
        <taxon>eudicotyledons</taxon>
        <taxon>Gunneridae</taxon>
        <taxon>Pentapetalae</taxon>
        <taxon>rosids</taxon>
        <taxon>malvids</taxon>
        <taxon>Brassicales</taxon>
        <taxon>Brassicaceae</taxon>
        <taxon>Camelineae</taxon>
        <taxon>Arabidopsis</taxon>
    </lineage>
</organism>
<proteinExistence type="predicted"/>
<accession>Q9LUI8</accession>
<name>FBK65_ARATH</name>
<gene>
    <name type="ordered locus">At3g22730</name>
    <name type="ORF">MWI23.10</name>
</gene>
<feature type="chain" id="PRO_0000283225" description="Putative F-box/kelch-repeat protein At3g22730">
    <location>
        <begin position="1"/>
        <end position="372"/>
    </location>
</feature>
<feature type="domain" description="F-box">
    <location>
        <begin position="1"/>
        <end position="50"/>
    </location>
</feature>
<feature type="repeat" description="Kelch 1">
    <location>
        <begin position="155"/>
        <end position="204"/>
    </location>
</feature>
<feature type="repeat" description="Kelch 2">
    <location>
        <begin position="245"/>
        <end position="293"/>
    </location>
</feature>
<feature type="repeat" description="Kelch 3">
    <location>
        <begin position="324"/>
        <end position="372"/>
    </location>
</feature>